<organism>
    <name type="scientific">Pectobacterium atrosepticum (strain SCRI 1043 / ATCC BAA-672)</name>
    <name type="common">Erwinia carotovora subsp. atroseptica</name>
    <dbReference type="NCBI Taxonomy" id="218491"/>
    <lineage>
        <taxon>Bacteria</taxon>
        <taxon>Pseudomonadati</taxon>
        <taxon>Pseudomonadota</taxon>
        <taxon>Gammaproteobacteria</taxon>
        <taxon>Enterobacterales</taxon>
        <taxon>Pectobacteriaceae</taxon>
        <taxon>Pectobacterium</taxon>
    </lineage>
</organism>
<keyword id="KW-0285">Flavoprotein</keyword>
<keyword id="KW-0288">FMN</keyword>
<keyword id="KW-0503">Monooxygenase</keyword>
<keyword id="KW-0560">Oxidoreductase</keyword>
<keyword id="KW-1185">Reference proteome</keyword>
<name>SSUD_PECAS</name>
<protein>
    <recommendedName>
        <fullName evidence="1">Alkanesulfonate monooxygenase</fullName>
        <ecNumber evidence="1">1.14.14.5</ecNumber>
    </recommendedName>
    <alternativeName>
        <fullName evidence="1">FMNH2-dependent aliphatic sulfonate monooxygenase</fullName>
    </alternativeName>
</protein>
<dbReference type="EC" id="1.14.14.5" evidence="1"/>
<dbReference type="EMBL" id="BX950851">
    <property type="protein sequence ID" value="CAG77307.1"/>
    <property type="molecule type" value="Genomic_DNA"/>
</dbReference>
<dbReference type="RefSeq" id="WP_011095871.1">
    <property type="nucleotide sequence ID" value="NC_004547.2"/>
</dbReference>
<dbReference type="SMR" id="Q6CYU4"/>
<dbReference type="STRING" id="218491.ECA4411"/>
<dbReference type="KEGG" id="eca:ECA4411"/>
<dbReference type="PATRIC" id="fig|218491.5.peg.4497"/>
<dbReference type="eggNOG" id="COG2141">
    <property type="taxonomic scope" value="Bacteria"/>
</dbReference>
<dbReference type="HOGENOM" id="CLU_027853_1_0_6"/>
<dbReference type="OrthoDB" id="9814695at2"/>
<dbReference type="Proteomes" id="UP000007966">
    <property type="component" value="Chromosome"/>
</dbReference>
<dbReference type="GO" id="GO:0008726">
    <property type="term" value="F:alkanesulfonate monooxygenase activity"/>
    <property type="evidence" value="ECO:0007669"/>
    <property type="project" value="UniProtKB-UniRule"/>
</dbReference>
<dbReference type="GO" id="GO:0046306">
    <property type="term" value="P:alkanesulfonate catabolic process"/>
    <property type="evidence" value="ECO:0007669"/>
    <property type="project" value="TreeGrafter"/>
</dbReference>
<dbReference type="CDD" id="cd01094">
    <property type="entry name" value="Alkanesulfonate_monoxygenase"/>
    <property type="match status" value="1"/>
</dbReference>
<dbReference type="FunFam" id="3.20.20.30:FF:000001">
    <property type="entry name" value="Alkanesulfonate monooxygenase"/>
    <property type="match status" value="1"/>
</dbReference>
<dbReference type="Gene3D" id="3.20.20.30">
    <property type="entry name" value="Luciferase-like domain"/>
    <property type="match status" value="1"/>
</dbReference>
<dbReference type="HAMAP" id="MF_01229">
    <property type="entry name" value="Alkanesulf_monooxygen"/>
    <property type="match status" value="1"/>
</dbReference>
<dbReference type="InterPro" id="IPR019911">
    <property type="entry name" value="Alkanesulphonate_mOase_FMN-dep"/>
</dbReference>
<dbReference type="InterPro" id="IPR011251">
    <property type="entry name" value="Luciferase-like_dom"/>
</dbReference>
<dbReference type="InterPro" id="IPR036661">
    <property type="entry name" value="Luciferase-like_sf"/>
</dbReference>
<dbReference type="InterPro" id="IPR050172">
    <property type="entry name" value="SsuD_RutA_monooxygenase"/>
</dbReference>
<dbReference type="NCBIfam" id="TIGR03565">
    <property type="entry name" value="alk_sulf_monoox"/>
    <property type="match status" value="1"/>
</dbReference>
<dbReference type="NCBIfam" id="NF001939">
    <property type="entry name" value="PRK00719.1"/>
    <property type="match status" value="1"/>
</dbReference>
<dbReference type="PANTHER" id="PTHR42847">
    <property type="entry name" value="ALKANESULFONATE MONOOXYGENASE"/>
    <property type="match status" value="1"/>
</dbReference>
<dbReference type="PANTHER" id="PTHR42847:SF4">
    <property type="entry name" value="ALKANESULFONATE MONOOXYGENASE-RELATED"/>
    <property type="match status" value="1"/>
</dbReference>
<dbReference type="Pfam" id="PF00296">
    <property type="entry name" value="Bac_luciferase"/>
    <property type="match status" value="1"/>
</dbReference>
<dbReference type="SUPFAM" id="SSF51679">
    <property type="entry name" value="Bacterial luciferase-like"/>
    <property type="match status" value="1"/>
</dbReference>
<feature type="chain" id="PRO_0000216709" description="Alkanesulfonate monooxygenase">
    <location>
        <begin position="1"/>
        <end position="380"/>
    </location>
</feature>
<accession>Q6CYU4</accession>
<proteinExistence type="inferred from homology"/>
<evidence type="ECO:0000255" key="1">
    <source>
        <dbReference type="HAMAP-Rule" id="MF_01229"/>
    </source>
</evidence>
<sequence>MSLNVFWFLPTHGDGRYLGSTEGARHVDYSYLQQVAQAAERQGFGGVLLPTGRSCEDSWLVAASLIPVTQRLKFLVALRPGVISPTIAARQAATLDRLSNGRALFNLVTGGDPEELAAEGLFLSHEERYEASAEFTHIWRRLLEGETVDFAGKHIQVKDAKLLYPPVQQPRPPLYFGGSSEAAQDLAAEQVDLYLTWGEPPEQVKEKLAEVRAKAAAQGREVRFGIRLHVIVRETTEEAWQAAERLISHLDEKTIADAQAALARFDSVGQQRMAALHGGKKDKLEISPNLWAGIGLVRGGAGTALVGDGPTVAERIKEYADLGIDTFILSGYPHLEEAYRVGELLFPHLDLAQQPTPLHAVSNAGEVVANRYVPRKVSQS</sequence>
<comment type="function">
    <text evidence="1">Catalyzes the desulfonation of aliphatic sulfonates.</text>
</comment>
<comment type="catalytic activity">
    <reaction evidence="1">
        <text>an alkanesulfonate + FMNH2 + O2 = an aldehyde + FMN + sulfite + H2O + 2 H(+)</text>
        <dbReference type="Rhea" id="RHEA:23064"/>
        <dbReference type="ChEBI" id="CHEBI:15377"/>
        <dbReference type="ChEBI" id="CHEBI:15378"/>
        <dbReference type="ChEBI" id="CHEBI:15379"/>
        <dbReference type="ChEBI" id="CHEBI:17359"/>
        <dbReference type="ChEBI" id="CHEBI:17478"/>
        <dbReference type="ChEBI" id="CHEBI:57618"/>
        <dbReference type="ChEBI" id="CHEBI:58210"/>
        <dbReference type="ChEBI" id="CHEBI:134249"/>
        <dbReference type="EC" id="1.14.14.5"/>
    </reaction>
</comment>
<comment type="subunit">
    <text evidence="1">Homotetramer.</text>
</comment>
<comment type="miscellaneous">
    <text evidence="1">FMNH(2) which is absolutely required for this enzymatic reaction, is provided by SsuE.</text>
</comment>
<comment type="similarity">
    <text evidence="1">Belongs to the SsuD family.</text>
</comment>
<reference key="1">
    <citation type="journal article" date="2004" name="Proc. Natl. Acad. Sci. U.S.A.">
        <title>Genome sequence of the enterobacterial phytopathogen Erwinia carotovora subsp. atroseptica and characterization of virulence factors.</title>
        <authorList>
            <person name="Bell K.S."/>
            <person name="Sebaihia M."/>
            <person name="Pritchard L."/>
            <person name="Holden M.T.G."/>
            <person name="Hyman L.J."/>
            <person name="Holeva M.C."/>
            <person name="Thomson N.R."/>
            <person name="Bentley S.D."/>
            <person name="Churcher L.J.C."/>
            <person name="Mungall K."/>
            <person name="Atkin R."/>
            <person name="Bason N."/>
            <person name="Brooks K."/>
            <person name="Chillingworth T."/>
            <person name="Clark K."/>
            <person name="Doggett J."/>
            <person name="Fraser A."/>
            <person name="Hance Z."/>
            <person name="Hauser H."/>
            <person name="Jagels K."/>
            <person name="Moule S."/>
            <person name="Norbertczak H."/>
            <person name="Ormond D."/>
            <person name="Price C."/>
            <person name="Quail M.A."/>
            <person name="Sanders M."/>
            <person name="Walker D."/>
            <person name="Whitehead S."/>
            <person name="Salmond G.P.C."/>
            <person name="Birch P.R.J."/>
            <person name="Parkhill J."/>
            <person name="Toth I.K."/>
        </authorList>
    </citation>
    <scope>NUCLEOTIDE SEQUENCE [LARGE SCALE GENOMIC DNA]</scope>
    <source>
        <strain>SCRI 1043 / ATCC BAA-672</strain>
    </source>
</reference>
<gene>
    <name evidence="1" type="primary">ssuD</name>
    <name type="ordered locus">ECA4411</name>
</gene>